<organism>
    <name type="scientific">Acinetobacter calcoaceticus</name>
    <dbReference type="NCBI Taxonomy" id="471"/>
    <lineage>
        <taxon>Bacteria</taxon>
        <taxon>Pseudomonadati</taxon>
        <taxon>Pseudomonadota</taxon>
        <taxon>Gammaproteobacteria</taxon>
        <taxon>Moraxellales</taxon>
        <taxon>Moraxellaceae</taxon>
        <taxon>Acinetobacter</taxon>
        <taxon>Acinetobacter calcoaceticus/baumannii complex</taxon>
    </lineage>
</organism>
<reference key="1">
    <citation type="journal article" date="1989" name="J. Bacteriol.">
        <title>Acinetobacter calcoaceticus genes involved in biosynthesis of the coenzyme pyrrolo-quinoline-quinone: nucleotide sequence and expression in Escherichia coli K-12.</title>
        <authorList>
            <person name="Goosen N."/>
            <person name="Horsman H.P.A."/>
            <person name="Huinen R.G.M."/>
            <person name="van de Putte P."/>
        </authorList>
    </citation>
    <scope>NUCLEOTIDE SEQUENCE [GENOMIC DNA]</scope>
    <source>
        <strain>LMD 79.41</strain>
    </source>
</reference>
<name>YPQL_ACICA</name>
<protein>
    <recommendedName>
        <fullName>Uncharacterized protein in pqq-V 5'region</fullName>
    </recommendedName>
    <alternativeName>
        <fullName>ORF L</fullName>
    </alternativeName>
</protein>
<sequence>MKNLTILFKVTTLSLAVALLVGCNDDDDNDTAPPAQRSNQTVNILAFNDFHGNLEPPKRYVEAPNPNDAAQSVRIPVGGVSYFADAIKKLKAENPNNAVVSAGDLISASPLTSSLFLDEPTIEVMNDIQIDFDAVGNHEFDRGTDELRRLKNGGCQQYTSTVPCQINKNFSGAKFDFLAANVAMKNDTSKTIFPAYKVKTYGGI</sequence>
<feature type="chain" id="PRO_0000066409" description="Uncharacterized protein in pqq-V 5'region">
    <location>
        <begin position="1"/>
        <end position="204" status="greater than"/>
    </location>
</feature>
<feature type="non-terminal residue">
    <location>
        <position position="204"/>
    </location>
</feature>
<proteinExistence type="predicted"/>
<dbReference type="EMBL" id="X06452">
    <property type="protein sequence ID" value="CAA29752.1"/>
    <property type="molecule type" value="Genomic_DNA"/>
</dbReference>
<dbReference type="PIR" id="A32252">
    <property type="entry name" value="A32252"/>
</dbReference>
<dbReference type="SMR" id="P07778"/>
<dbReference type="STRING" id="471.BUM88_09575"/>
<dbReference type="GO" id="GO:0030288">
    <property type="term" value="C:outer membrane-bounded periplasmic space"/>
    <property type="evidence" value="ECO:0007669"/>
    <property type="project" value="TreeGrafter"/>
</dbReference>
<dbReference type="GO" id="GO:0008253">
    <property type="term" value="F:5'-nucleotidase activity"/>
    <property type="evidence" value="ECO:0007669"/>
    <property type="project" value="TreeGrafter"/>
</dbReference>
<dbReference type="GO" id="GO:0008768">
    <property type="term" value="F:UDP-sugar diphosphatase activity"/>
    <property type="evidence" value="ECO:0007669"/>
    <property type="project" value="TreeGrafter"/>
</dbReference>
<dbReference type="GO" id="GO:0009166">
    <property type="term" value="P:nucleotide catabolic process"/>
    <property type="evidence" value="ECO:0007669"/>
    <property type="project" value="InterPro"/>
</dbReference>
<dbReference type="Gene3D" id="3.60.21.10">
    <property type="match status" value="1"/>
</dbReference>
<dbReference type="InterPro" id="IPR006179">
    <property type="entry name" value="5_nucleotidase/apyrase"/>
</dbReference>
<dbReference type="InterPro" id="IPR004843">
    <property type="entry name" value="Calcineurin-like_PHP_ApaH"/>
</dbReference>
<dbReference type="InterPro" id="IPR029052">
    <property type="entry name" value="Metallo-depent_PP-like"/>
</dbReference>
<dbReference type="PANTHER" id="PTHR11575:SF24">
    <property type="entry name" value="5'-NUCLEOTIDASE"/>
    <property type="match status" value="1"/>
</dbReference>
<dbReference type="PANTHER" id="PTHR11575">
    <property type="entry name" value="5'-NUCLEOTIDASE-RELATED"/>
    <property type="match status" value="1"/>
</dbReference>
<dbReference type="Pfam" id="PF00149">
    <property type="entry name" value="Metallophos"/>
    <property type="match status" value="1"/>
</dbReference>
<dbReference type="SUPFAM" id="SSF56300">
    <property type="entry name" value="Metallo-dependent phosphatases"/>
    <property type="match status" value="1"/>
</dbReference>
<dbReference type="PROSITE" id="PS51257">
    <property type="entry name" value="PROKAR_LIPOPROTEIN"/>
    <property type="match status" value="1"/>
</dbReference>
<accession>P07778</accession>